<name>MNMG_BARBK</name>
<organism>
    <name type="scientific">Bartonella bacilliformis (strain ATCC 35685 / KC583 / Herrer 020/F12,63)</name>
    <dbReference type="NCBI Taxonomy" id="360095"/>
    <lineage>
        <taxon>Bacteria</taxon>
        <taxon>Pseudomonadati</taxon>
        <taxon>Pseudomonadota</taxon>
        <taxon>Alphaproteobacteria</taxon>
        <taxon>Hyphomicrobiales</taxon>
        <taxon>Bartonellaceae</taxon>
        <taxon>Bartonella</taxon>
    </lineage>
</organism>
<evidence type="ECO:0000255" key="1">
    <source>
        <dbReference type="HAMAP-Rule" id="MF_00129"/>
    </source>
</evidence>
<gene>
    <name evidence="1" type="primary">mnmG</name>
    <name evidence="1" type="synonym">gidA</name>
    <name type="ordered locus">BARBAKC583_0011</name>
</gene>
<sequence>MQSYDVIIVGGGHAGCEAASASARTGARTALVTYRLSDMGTMSCNPAIGGLGKGHLVREIDALDGLMGRAADFAGIQFRLLNRRKGPAVRGPRTQADRQLYKKAIQKLLREQDNLFIIEDEVVDIIVKNNRVSGVFLKNQGNIFSGAVVLTTGTFLNGLIHIGDKTWPAGRMGEQASVQLAERLKNYGISFGRLKTGTPARLSKKTIRWDVLPKQQADEDPVPFSFLTEKIKQPQIECAITRTNAQTHHIISENIHRSALYSGAIEGVGPRYCPSIEDKIIKFGERDGHQIFLEPEGLEDDVIYPNGISTSLPEDVQISLLKTIEGLENVNVLQPGYAIEYDFINPQYLSKTLELRSLPGLFLAGQINGTTGYEEAAAQGLLAGLNAARQVGGLDEIILSRSTAYIGVMIDDLISRGVCEPYRMFTSRAEFRLSLRADNADARLTPLAQEWGIVSHKRWTCYQNKQQRLDHARSICQKLFLTPNEASAHGLQINNDGVRRSAYSLLSYPNMNVARLTDFWPQLHSIDAKTVESLEIEAQYAVYLERQKQDIAALQRDESLEIPSSLNIQAIYGLSNELKTKIQKISPRSIADAQKIDGMTPAALSLIITYIQRQRREKGKLA</sequence>
<dbReference type="EMBL" id="CP000524">
    <property type="protein sequence ID" value="ABM45137.1"/>
    <property type="molecule type" value="Genomic_DNA"/>
</dbReference>
<dbReference type="RefSeq" id="WP_005765688.1">
    <property type="nucleotide sequence ID" value="NC_008783.1"/>
</dbReference>
<dbReference type="SMR" id="A1UQU7"/>
<dbReference type="STRING" id="360095.BARBAKC583_0011"/>
<dbReference type="GeneID" id="4684542"/>
<dbReference type="KEGG" id="bbk:BARBAKC583_0011"/>
<dbReference type="PATRIC" id="fig|360095.6.peg.11"/>
<dbReference type="eggNOG" id="COG0445">
    <property type="taxonomic scope" value="Bacteria"/>
</dbReference>
<dbReference type="HOGENOM" id="CLU_007831_2_2_5"/>
<dbReference type="OrthoDB" id="9815560at2"/>
<dbReference type="Proteomes" id="UP000000643">
    <property type="component" value="Chromosome"/>
</dbReference>
<dbReference type="GO" id="GO:0005829">
    <property type="term" value="C:cytosol"/>
    <property type="evidence" value="ECO:0007669"/>
    <property type="project" value="TreeGrafter"/>
</dbReference>
<dbReference type="GO" id="GO:0050660">
    <property type="term" value="F:flavin adenine dinucleotide binding"/>
    <property type="evidence" value="ECO:0007669"/>
    <property type="project" value="UniProtKB-UniRule"/>
</dbReference>
<dbReference type="GO" id="GO:0030488">
    <property type="term" value="P:tRNA methylation"/>
    <property type="evidence" value="ECO:0007669"/>
    <property type="project" value="TreeGrafter"/>
</dbReference>
<dbReference type="GO" id="GO:0002098">
    <property type="term" value="P:tRNA wobble uridine modification"/>
    <property type="evidence" value="ECO:0007669"/>
    <property type="project" value="InterPro"/>
</dbReference>
<dbReference type="FunFam" id="3.50.50.60:FF:000082">
    <property type="entry name" value="protein MTO1 homolog, mitochondrial isoform X1"/>
    <property type="match status" value="1"/>
</dbReference>
<dbReference type="FunFam" id="3.50.50.60:FF:000002">
    <property type="entry name" value="tRNA uridine 5-carboxymethylaminomethyl modification enzyme MnmG"/>
    <property type="match status" value="1"/>
</dbReference>
<dbReference type="Gene3D" id="3.50.50.60">
    <property type="entry name" value="FAD/NAD(P)-binding domain"/>
    <property type="match status" value="2"/>
</dbReference>
<dbReference type="Gene3D" id="1.10.150.570">
    <property type="entry name" value="GidA associated domain, C-terminal subdomain"/>
    <property type="match status" value="1"/>
</dbReference>
<dbReference type="Gene3D" id="1.10.10.1800">
    <property type="entry name" value="tRNA uridine 5-carboxymethylaminomethyl modification enzyme MnmG/GidA"/>
    <property type="match status" value="1"/>
</dbReference>
<dbReference type="HAMAP" id="MF_00129">
    <property type="entry name" value="MnmG_GidA"/>
    <property type="match status" value="1"/>
</dbReference>
<dbReference type="InterPro" id="IPR036188">
    <property type="entry name" value="FAD/NAD-bd_sf"/>
</dbReference>
<dbReference type="InterPro" id="IPR049312">
    <property type="entry name" value="GIDA_C_N"/>
</dbReference>
<dbReference type="InterPro" id="IPR004416">
    <property type="entry name" value="MnmG"/>
</dbReference>
<dbReference type="InterPro" id="IPR002218">
    <property type="entry name" value="MnmG-rel"/>
</dbReference>
<dbReference type="InterPro" id="IPR020595">
    <property type="entry name" value="MnmG-rel_CS"/>
</dbReference>
<dbReference type="InterPro" id="IPR026904">
    <property type="entry name" value="MnmG_C"/>
</dbReference>
<dbReference type="InterPro" id="IPR047001">
    <property type="entry name" value="MnmG_C_subdom"/>
</dbReference>
<dbReference type="InterPro" id="IPR044920">
    <property type="entry name" value="MnmG_C_subdom_sf"/>
</dbReference>
<dbReference type="InterPro" id="IPR040131">
    <property type="entry name" value="MnmG_N"/>
</dbReference>
<dbReference type="NCBIfam" id="TIGR00136">
    <property type="entry name" value="mnmG_gidA"/>
    <property type="match status" value="1"/>
</dbReference>
<dbReference type="PANTHER" id="PTHR11806">
    <property type="entry name" value="GLUCOSE INHIBITED DIVISION PROTEIN A"/>
    <property type="match status" value="1"/>
</dbReference>
<dbReference type="PANTHER" id="PTHR11806:SF0">
    <property type="entry name" value="PROTEIN MTO1 HOMOLOG, MITOCHONDRIAL"/>
    <property type="match status" value="1"/>
</dbReference>
<dbReference type="Pfam" id="PF01134">
    <property type="entry name" value="GIDA"/>
    <property type="match status" value="1"/>
</dbReference>
<dbReference type="Pfam" id="PF21680">
    <property type="entry name" value="GIDA_C_1st"/>
    <property type="match status" value="1"/>
</dbReference>
<dbReference type="Pfam" id="PF13932">
    <property type="entry name" value="SAM_GIDA_C"/>
    <property type="match status" value="1"/>
</dbReference>
<dbReference type="SMART" id="SM01228">
    <property type="entry name" value="GIDA_assoc_3"/>
    <property type="match status" value="1"/>
</dbReference>
<dbReference type="SUPFAM" id="SSF51905">
    <property type="entry name" value="FAD/NAD(P)-binding domain"/>
    <property type="match status" value="1"/>
</dbReference>
<dbReference type="PROSITE" id="PS01280">
    <property type="entry name" value="GIDA_1"/>
    <property type="match status" value="1"/>
</dbReference>
<dbReference type="PROSITE" id="PS01281">
    <property type="entry name" value="GIDA_2"/>
    <property type="match status" value="1"/>
</dbReference>
<keyword id="KW-0963">Cytoplasm</keyword>
<keyword id="KW-0274">FAD</keyword>
<keyword id="KW-0285">Flavoprotein</keyword>
<keyword id="KW-0520">NAD</keyword>
<keyword id="KW-0819">tRNA processing</keyword>
<proteinExistence type="inferred from homology"/>
<accession>A1UQU7</accession>
<comment type="function">
    <text evidence="1">NAD-binding protein involved in the addition of a carboxymethylaminomethyl (cmnm) group at the wobble position (U34) of certain tRNAs, forming tRNA-cmnm(5)s(2)U34.</text>
</comment>
<comment type="cofactor">
    <cofactor evidence="1">
        <name>FAD</name>
        <dbReference type="ChEBI" id="CHEBI:57692"/>
    </cofactor>
</comment>
<comment type="subunit">
    <text evidence="1">Homodimer. Heterotetramer of two MnmE and two MnmG subunits.</text>
</comment>
<comment type="subcellular location">
    <subcellularLocation>
        <location evidence="1">Cytoplasm</location>
    </subcellularLocation>
</comment>
<comment type="similarity">
    <text evidence="1">Belongs to the MnmG family.</text>
</comment>
<protein>
    <recommendedName>
        <fullName evidence="1">tRNA uridine 5-carboxymethylaminomethyl modification enzyme MnmG</fullName>
    </recommendedName>
    <alternativeName>
        <fullName evidence="1">Glucose-inhibited division protein A</fullName>
    </alternativeName>
</protein>
<reference key="1">
    <citation type="submission" date="2006-12" db="EMBL/GenBank/DDBJ databases">
        <authorList>
            <person name="Hendrix L."/>
            <person name="Mohamoud Y."/>
            <person name="Radune D."/>
            <person name="Shvartsbeyn A."/>
            <person name="Daugherty S."/>
            <person name="Dodson R."/>
            <person name="Durkin A.S."/>
            <person name="Harkins D."/>
            <person name="Huot H."/>
            <person name="Kothari S.P."/>
            <person name="Madupu R."/>
            <person name="Li J."/>
            <person name="Nelson W.C."/>
            <person name="Shrivastava S."/>
            <person name="Giglio M.G."/>
            <person name="Haft D."/>
            <person name="Selengut J."/>
            <person name="Fraser-Ligget C."/>
            <person name="Seshadri R."/>
        </authorList>
    </citation>
    <scope>NUCLEOTIDE SEQUENCE [LARGE SCALE GENOMIC DNA]</scope>
    <source>
        <strain>ATCC 35685 / KC583 / Herrer 020/F12,63</strain>
    </source>
</reference>
<feature type="chain" id="PRO_1000016551" description="tRNA uridine 5-carboxymethylaminomethyl modification enzyme MnmG">
    <location>
        <begin position="1"/>
        <end position="622"/>
    </location>
</feature>
<feature type="binding site" evidence="1">
    <location>
        <begin position="10"/>
        <end position="15"/>
    </location>
    <ligand>
        <name>FAD</name>
        <dbReference type="ChEBI" id="CHEBI:57692"/>
    </ligand>
</feature>
<feature type="binding site" evidence="1">
    <location>
        <position position="122"/>
    </location>
    <ligand>
        <name>FAD</name>
        <dbReference type="ChEBI" id="CHEBI:57692"/>
    </ligand>
</feature>
<feature type="binding site" evidence="1">
    <location>
        <position position="177"/>
    </location>
    <ligand>
        <name>FAD</name>
        <dbReference type="ChEBI" id="CHEBI:57692"/>
    </ligand>
</feature>
<feature type="binding site" evidence="1">
    <location>
        <begin position="269"/>
        <end position="283"/>
    </location>
    <ligand>
        <name>NAD(+)</name>
        <dbReference type="ChEBI" id="CHEBI:57540"/>
    </ligand>
</feature>
<feature type="binding site" evidence="1">
    <location>
        <position position="366"/>
    </location>
    <ligand>
        <name>FAD</name>
        <dbReference type="ChEBI" id="CHEBI:57692"/>
    </ligand>
</feature>